<sequence length="45" mass="5161">MKVKASIKADPSKGDILVRRSGRLYVINKKDPNRKQRQKGPARKK</sequence>
<reference key="1">
    <citation type="journal article" date="2004" name="Science">
        <title>Illuminating the evolutionary history of chlamydiae.</title>
        <authorList>
            <person name="Horn M."/>
            <person name="Collingro A."/>
            <person name="Schmitz-Esser S."/>
            <person name="Beier C.L."/>
            <person name="Purkhold U."/>
            <person name="Fartmann B."/>
            <person name="Brandt P."/>
            <person name="Nyakatura G.J."/>
            <person name="Droege M."/>
            <person name="Frishman D."/>
            <person name="Rattei T."/>
            <person name="Mewes H.-W."/>
            <person name="Wagner M."/>
        </authorList>
    </citation>
    <scope>NUCLEOTIDE SEQUENCE [LARGE SCALE GENOMIC DNA]</scope>
    <source>
        <strain>UWE25</strain>
    </source>
</reference>
<dbReference type="EMBL" id="BX908798">
    <property type="protein sequence ID" value="CAF24329.1"/>
    <property type="molecule type" value="Genomic_DNA"/>
</dbReference>
<dbReference type="RefSeq" id="WP_011176151.1">
    <property type="nucleotide sequence ID" value="NC_005861.2"/>
</dbReference>
<dbReference type="SMR" id="Q6MAS0"/>
<dbReference type="STRING" id="264201.pc1605"/>
<dbReference type="KEGG" id="pcu:PC_RS07690"/>
<dbReference type="eggNOG" id="COG0257">
    <property type="taxonomic scope" value="Bacteria"/>
</dbReference>
<dbReference type="HOGENOM" id="CLU_135723_3_3_0"/>
<dbReference type="OrthoDB" id="9801558at2"/>
<dbReference type="Proteomes" id="UP000000529">
    <property type="component" value="Chromosome"/>
</dbReference>
<dbReference type="GO" id="GO:1990904">
    <property type="term" value="C:ribonucleoprotein complex"/>
    <property type="evidence" value="ECO:0007669"/>
    <property type="project" value="UniProtKB-KW"/>
</dbReference>
<dbReference type="GO" id="GO:0005840">
    <property type="term" value="C:ribosome"/>
    <property type="evidence" value="ECO:0007669"/>
    <property type="project" value="UniProtKB-KW"/>
</dbReference>
<dbReference type="GO" id="GO:0003735">
    <property type="term" value="F:structural constituent of ribosome"/>
    <property type="evidence" value="ECO:0007669"/>
    <property type="project" value="InterPro"/>
</dbReference>
<dbReference type="GO" id="GO:0006412">
    <property type="term" value="P:translation"/>
    <property type="evidence" value="ECO:0007669"/>
    <property type="project" value="UniProtKB-UniRule"/>
</dbReference>
<dbReference type="HAMAP" id="MF_00251">
    <property type="entry name" value="Ribosomal_bL36"/>
    <property type="match status" value="1"/>
</dbReference>
<dbReference type="InterPro" id="IPR000473">
    <property type="entry name" value="Ribosomal_bL36"/>
</dbReference>
<dbReference type="InterPro" id="IPR035977">
    <property type="entry name" value="Ribosomal_bL36_sp"/>
</dbReference>
<dbReference type="NCBIfam" id="TIGR01022">
    <property type="entry name" value="rpmJ_bact"/>
    <property type="match status" value="1"/>
</dbReference>
<dbReference type="Pfam" id="PF00444">
    <property type="entry name" value="Ribosomal_L36"/>
    <property type="match status" value="1"/>
</dbReference>
<dbReference type="SUPFAM" id="SSF57840">
    <property type="entry name" value="Ribosomal protein L36"/>
    <property type="match status" value="1"/>
</dbReference>
<dbReference type="PROSITE" id="PS00828">
    <property type="entry name" value="RIBOSOMAL_L36"/>
    <property type="match status" value="1"/>
</dbReference>
<proteinExistence type="inferred from homology"/>
<comment type="similarity">
    <text evidence="1">Belongs to the bacterial ribosomal protein bL36 family.</text>
</comment>
<gene>
    <name evidence="1" type="primary">rpmJ</name>
    <name type="ordered locus">pc1605</name>
</gene>
<evidence type="ECO:0000255" key="1">
    <source>
        <dbReference type="HAMAP-Rule" id="MF_00251"/>
    </source>
</evidence>
<evidence type="ECO:0000256" key="2">
    <source>
        <dbReference type="SAM" id="MobiDB-lite"/>
    </source>
</evidence>
<evidence type="ECO:0000305" key="3"/>
<name>RL36_PARUW</name>
<organism>
    <name type="scientific">Protochlamydia amoebophila (strain UWE25)</name>
    <dbReference type="NCBI Taxonomy" id="264201"/>
    <lineage>
        <taxon>Bacteria</taxon>
        <taxon>Pseudomonadati</taxon>
        <taxon>Chlamydiota</taxon>
        <taxon>Chlamydiia</taxon>
        <taxon>Parachlamydiales</taxon>
        <taxon>Parachlamydiaceae</taxon>
        <taxon>Candidatus Protochlamydia</taxon>
    </lineage>
</organism>
<accession>Q6MAS0</accession>
<keyword id="KW-1185">Reference proteome</keyword>
<keyword id="KW-0687">Ribonucleoprotein</keyword>
<keyword id="KW-0689">Ribosomal protein</keyword>
<feature type="chain" id="PRO_0000126230" description="Large ribosomal subunit protein bL36">
    <location>
        <begin position="1"/>
        <end position="45"/>
    </location>
</feature>
<feature type="region of interest" description="Disordered" evidence="2">
    <location>
        <begin position="26"/>
        <end position="45"/>
    </location>
</feature>
<feature type="compositionally biased region" description="Basic residues" evidence="2">
    <location>
        <begin position="35"/>
        <end position="45"/>
    </location>
</feature>
<protein>
    <recommendedName>
        <fullName evidence="1">Large ribosomal subunit protein bL36</fullName>
    </recommendedName>
    <alternativeName>
        <fullName evidence="3">50S ribosomal protein L36</fullName>
    </alternativeName>
</protein>